<sequence length="166" mass="18548">MGPILVLLVLLSLLEAGSANYDPCLDFDPENCTLTFAPDTSRICGVLIKCGWECRSVEITHNNKTWNNTLSTTWEPGVPQWYTVSVRGPDGSIRISNNTFIFSKMCDLAMFMSKQYSLWPPSKDNIVTFSIAYCLCACLLTALLCVCIHLLVTTRIKNANNKEKMP</sequence>
<protein>
    <recommendedName>
        <fullName>Early E3 18.5 kDa glycoprotein</fullName>
    </recommendedName>
    <alternativeName>
        <fullName>E3-19K</fullName>
    </alternativeName>
    <alternativeName>
        <fullName>E3gp 19 kDa</fullName>
        <shortName>E19</shortName>
    </alternativeName>
    <alternativeName>
        <fullName>GP19K</fullName>
    </alternativeName>
</protein>
<dbReference type="EMBL" id="M94459">
    <property type="status" value="NOT_ANNOTATED_CDS"/>
    <property type="molecule type" value="Genomic_DNA"/>
</dbReference>
<dbReference type="PIR" id="E44057">
    <property type="entry name" value="E44057"/>
</dbReference>
<dbReference type="SMR" id="P35771"/>
<dbReference type="GO" id="GO:0044167">
    <property type="term" value="C:host cell endoplasmic reticulum membrane"/>
    <property type="evidence" value="ECO:0007669"/>
    <property type="project" value="UniProtKB-SubCell"/>
</dbReference>
<dbReference type="GO" id="GO:0016020">
    <property type="term" value="C:membrane"/>
    <property type="evidence" value="ECO:0007669"/>
    <property type="project" value="UniProtKB-KW"/>
</dbReference>
<dbReference type="GO" id="GO:0005537">
    <property type="term" value="F:D-mannose binding"/>
    <property type="evidence" value="ECO:0007669"/>
    <property type="project" value="UniProtKB-KW"/>
</dbReference>
<dbReference type="GO" id="GO:0046776">
    <property type="term" value="P:symbiont-mediated suppression of host antigen processing and presentation of peptide antigen via MHC class I"/>
    <property type="evidence" value="ECO:0007669"/>
    <property type="project" value="UniProtKB-KW"/>
</dbReference>
<dbReference type="Gene3D" id="2.60.40.3530">
    <property type="match status" value="1"/>
</dbReference>
<dbReference type="InterPro" id="IPR006965">
    <property type="entry name" value="Adenovirus_Gp19K"/>
</dbReference>
<dbReference type="InterPro" id="IPR038710">
    <property type="entry name" value="Adenovirus_Gp19K_sf"/>
</dbReference>
<dbReference type="Pfam" id="PF04881">
    <property type="entry name" value="Adeno_GP19K"/>
    <property type="match status" value="1"/>
</dbReference>
<evidence type="ECO:0000250" key="1"/>
<evidence type="ECO:0000255" key="2"/>
<evidence type="ECO:0000305" key="3"/>
<accession>P35771</accession>
<proteinExistence type="evidence at transcript level"/>
<comment type="function">
    <text evidence="1">Binds and retains class I heavy chains in the endoplasmic reticulum during the early period of virus infection, thereby impairing their transport to the cell surface. Also delays the expression of class I alleles that it cannot affect by direct retention. Binds transporters associated with antigen processing (TAP) and acts as a tapasin inhibitor, preventing class I/TAP association. In consequence, infected cells are masked for immune recognition by cytotoxic T-lymphocytes (By similarity).</text>
</comment>
<comment type="subcellular location">
    <subcellularLocation>
        <location>Host endoplasmic reticulum membrane</location>
        <topology>Single-pass type I membrane protein</topology>
    </subcellularLocation>
</comment>
<comment type="developmental stage">
    <text>Expressed at early period of virus infection.</text>
</comment>
<comment type="domain">
    <text>The lumenal domain binds directly to the peptide-binding domain of class I molecules.</text>
</comment>
<comment type="domain">
    <text evidence="1">The di-lysine motif confers endoplasmic reticulum localization for type I membrane proteins.</text>
</comment>
<comment type="PTM">
    <text evidence="1">Both disulfide bonds are absolutely critical for the interaction with MHC antigens.</text>
</comment>
<comment type="PTM">
    <text evidence="1">N-glycosylated; high-mannose.</text>
</comment>
<comment type="similarity">
    <text evidence="3">Belongs to the adenoviridae E19 family.</text>
</comment>
<reference key="1">
    <citation type="journal article" date="1992" name="Virology">
        <title>The nucleotide sequence of adenovirus type 11 early 3 region: comparison of genome type Ad11p and Ad11a.</title>
        <authorList>
            <person name="Mei Y.-F."/>
            <person name="Wadell G."/>
        </authorList>
    </citation>
    <scope>NUCLEOTIDE SEQUENCE [GENOMIC DNA]</scope>
</reference>
<organism>
    <name type="scientific">Human adenovirus B serotype 11 (strain BC34)</name>
    <name type="common">HAdV-11</name>
    <name type="synonym">Human adenovirus 11A (strain BC34)</name>
    <dbReference type="NCBI Taxonomy" id="343463"/>
    <lineage>
        <taxon>Viruses</taxon>
        <taxon>Varidnaviria</taxon>
        <taxon>Bamfordvirae</taxon>
        <taxon>Preplasmiviricota</taxon>
        <taxon>Tectiliviricetes</taxon>
        <taxon>Rowavirales</taxon>
        <taxon>Adenoviridae</taxon>
        <taxon>Mastadenovirus</taxon>
        <taxon>Human mastadenovirus B</taxon>
    </lineage>
</organism>
<organismHost>
    <name type="scientific">Homo sapiens</name>
    <name type="common">Human</name>
    <dbReference type="NCBI Taxonomy" id="9606"/>
</organismHost>
<keyword id="KW-1015">Disulfide bond</keyword>
<keyword id="KW-0244">Early protein</keyword>
<keyword id="KW-0325">Glycoprotein</keyword>
<keyword id="KW-1038">Host endoplasmic reticulum</keyword>
<keyword id="KW-1043">Host membrane</keyword>
<keyword id="KW-0945">Host-virus interaction</keyword>
<keyword id="KW-1080">Inhibition of host adaptive immune response by virus</keyword>
<keyword id="KW-1108">Inhibition of host tapasin by virus</keyword>
<keyword id="KW-0430">Lectin</keyword>
<keyword id="KW-0465">Mannose-binding</keyword>
<keyword id="KW-0472">Membrane</keyword>
<keyword id="KW-0732">Signal</keyword>
<keyword id="KW-0812">Transmembrane</keyword>
<keyword id="KW-1133">Transmembrane helix</keyword>
<keyword id="KW-0899">Viral immunoevasion</keyword>
<feature type="signal peptide" evidence="2">
    <location>
        <begin position="1"/>
        <end position="19"/>
    </location>
</feature>
<feature type="chain" id="PRO_0000036486" description="Early E3 18.5 kDa glycoprotein">
    <location>
        <begin position="20"/>
        <end position="166"/>
    </location>
</feature>
<feature type="topological domain" description="Lumenal" evidence="2">
    <location>
        <begin position="20"/>
        <end position="131"/>
    </location>
</feature>
<feature type="transmembrane region" description="Helical" evidence="2">
    <location>
        <begin position="132"/>
        <end position="152"/>
    </location>
</feature>
<feature type="topological domain" description="Cytoplasmic" evidence="2">
    <location>
        <begin position="153"/>
        <end position="166"/>
    </location>
</feature>
<feature type="short sequence motif" description="Di-lysine motif" evidence="1">
    <location>
        <begin position="162"/>
        <end position="166"/>
    </location>
</feature>
<feature type="glycosylation site" description="N-linked (GlcNAc...) asparagine; by host" evidence="2">
    <location>
        <position position="31"/>
    </location>
</feature>
<feature type="glycosylation site" description="N-linked (GlcNAc...) asparagine; by host" evidence="2">
    <location>
        <position position="63"/>
    </location>
</feature>
<feature type="glycosylation site" description="N-linked (GlcNAc...) asparagine; by host" evidence="2">
    <location>
        <position position="67"/>
    </location>
</feature>
<feature type="glycosylation site" description="N-linked (GlcNAc...) asparagine; by host" evidence="2">
    <location>
        <position position="97"/>
    </location>
</feature>
<feature type="disulfide bond" evidence="1">
    <location>
        <begin position="32"/>
        <end position="50"/>
    </location>
</feature>
<feature type="disulfide bond" evidence="1">
    <location>
        <begin position="44"/>
        <end position="106"/>
    </location>
</feature>
<name>E3GL_ADE1A</name>